<accession>Q14593</accession>
<accession>B3KQZ5</accession>
<accession>Q6P3V4</accession>
<name>ZN273_HUMAN</name>
<reference key="1">
    <citation type="journal article" date="2004" name="Nat. Genet.">
        <title>Complete sequencing and characterization of 21,243 full-length human cDNAs.</title>
        <authorList>
            <person name="Ota T."/>
            <person name="Suzuki Y."/>
            <person name="Nishikawa T."/>
            <person name="Otsuki T."/>
            <person name="Sugiyama T."/>
            <person name="Irie R."/>
            <person name="Wakamatsu A."/>
            <person name="Hayashi K."/>
            <person name="Sato H."/>
            <person name="Nagai K."/>
            <person name="Kimura K."/>
            <person name="Makita H."/>
            <person name="Sekine M."/>
            <person name="Obayashi M."/>
            <person name="Nishi T."/>
            <person name="Shibahara T."/>
            <person name="Tanaka T."/>
            <person name="Ishii S."/>
            <person name="Yamamoto J."/>
            <person name="Saito K."/>
            <person name="Kawai Y."/>
            <person name="Isono Y."/>
            <person name="Nakamura Y."/>
            <person name="Nagahari K."/>
            <person name="Murakami K."/>
            <person name="Yasuda T."/>
            <person name="Iwayanagi T."/>
            <person name="Wagatsuma M."/>
            <person name="Shiratori A."/>
            <person name="Sudo H."/>
            <person name="Hosoiri T."/>
            <person name="Kaku Y."/>
            <person name="Kodaira H."/>
            <person name="Kondo H."/>
            <person name="Sugawara M."/>
            <person name="Takahashi M."/>
            <person name="Kanda K."/>
            <person name="Yokoi T."/>
            <person name="Furuya T."/>
            <person name="Kikkawa E."/>
            <person name="Omura Y."/>
            <person name="Abe K."/>
            <person name="Kamihara K."/>
            <person name="Katsuta N."/>
            <person name="Sato K."/>
            <person name="Tanikawa M."/>
            <person name="Yamazaki M."/>
            <person name="Ninomiya K."/>
            <person name="Ishibashi T."/>
            <person name="Yamashita H."/>
            <person name="Murakawa K."/>
            <person name="Fujimori K."/>
            <person name="Tanai H."/>
            <person name="Kimata M."/>
            <person name="Watanabe M."/>
            <person name="Hiraoka S."/>
            <person name="Chiba Y."/>
            <person name="Ishida S."/>
            <person name="Ono Y."/>
            <person name="Takiguchi S."/>
            <person name="Watanabe S."/>
            <person name="Yosida M."/>
            <person name="Hotuta T."/>
            <person name="Kusano J."/>
            <person name="Kanehori K."/>
            <person name="Takahashi-Fujii A."/>
            <person name="Hara H."/>
            <person name="Tanase T.-O."/>
            <person name="Nomura Y."/>
            <person name="Togiya S."/>
            <person name="Komai F."/>
            <person name="Hara R."/>
            <person name="Takeuchi K."/>
            <person name="Arita M."/>
            <person name="Imose N."/>
            <person name="Musashino K."/>
            <person name="Yuuki H."/>
            <person name="Oshima A."/>
            <person name="Sasaki N."/>
            <person name="Aotsuka S."/>
            <person name="Yoshikawa Y."/>
            <person name="Matsunawa H."/>
            <person name="Ichihara T."/>
            <person name="Shiohata N."/>
            <person name="Sano S."/>
            <person name="Moriya S."/>
            <person name="Momiyama H."/>
            <person name="Satoh N."/>
            <person name="Takami S."/>
            <person name="Terashima Y."/>
            <person name="Suzuki O."/>
            <person name="Nakagawa S."/>
            <person name="Senoh A."/>
            <person name="Mizoguchi H."/>
            <person name="Goto Y."/>
            <person name="Shimizu F."/>
            <person name="Wakebe H."/>
            <person name="Hishigaki H."/>
            <person name="Watanabe T."/>
            <person name="Sugiyama A."/>
            <person name="Takemoto M."/>
            <person name="Kawakami B."/>
            <person name="Yamazaki M."/>
            <person name="Watanabe K."/>
            <person name="Kumagai A."/>
            <person name="Itakura S."/>
            <person name="Fukuzumi Y."/>
            <person name="Fujimori Y."/>
            <person name="Komiyama M."/>
            <person name="Tashiro H."/>
            <person name="Tanigami A."/>
            <person name="Fujiwara T."/>
            <person name="Ono T."/>
            <person name="Yamada K."/>
            <person name="Fujii Y."/>
            <person name="Ozaki K."/>
            <person name="Hirao M."/>
            <person name="Ohmori Y."/>
            <person name="Kawabata A."/>
            <person name="Hikiji T."/>
            <person name="Kobatake N."/>
            <person name="Inagaki H."/>
            <person name="Ikema Y."/>
            <person name="Okamoto S."/>
            <person name="Okitani R."/>
            <person name="Kawakami T."/>
            <person name="Noguchi S."/>
            <person name="Itoh T."/>
            <person name="Shigeta K."/>
            <person name="Senba T."/>
            <person name="Matsumura K."/>
            <person name="Nakajima Y."/>
            <person name="Mizuno T."/>
            <person name="Morinaga M."/>
            <person name="Sasaki M."/>
            <person name="Togashi T."/>
            <person name="Oyama M."/>
            <person name="Hata H."/>
            <person name="Watanabe M."/>
            <person name="Komatsu T."/>
            <person name="Mizushima-Sugano J."/>
            <person name="Satoh T."/>
            <person name="Shirai Y."/>
            <person name="Takahashi Y."/>
            <person name="Nakagawa K."/>
            <person name="Okumura K."/>
            <person name="Nagase T."/>
            <person name="Nomura N."/>
            <person name="Kikuchi H."/>
            <person name="Masuho Y."/>
            <person name="Yamashita R."/>
            <person name="Nakai K."/>
            <person name="Yada T."/>
            <person name="Nakamura Y."/>
            <person name="Ohara O."/>
            <person name="Isogai T."/>
            <person name="Sugano S."/>
        </authorList>
    </citation>
    <scope>NUCLEOTIDE SEQUENCE [LARGE SCALE MRNA] (ISOFORM 2)</scope>
    <scope>NUCLEOTIDE SEQUENCE [LARGE SCALE MRNA] OF 1-175 (ISOFORM 1)</scope>
    <source>
        <tissue>Cerebellum</tissue>
    </source>
</reference>
<reference key="2">
    <citation type="journal article" date="2003" name="Nature">
        <title>The DNA sequence of human chromosome 7.</title>
        <authorList>
            <person name="Hillier L.W."/>
            <person name="Fulton R.S."/>
            <person name="Fulton L.A."/>
            <person name="Graves T.A."/>
            <person name="Pepin K.H."/>
            <person name="Wagner-McPherson C."/>
            <person name="Layman D."/>
            <person name="Maas J."/>
            <person name="Jaeger S."/>
            <person name="Walker R."/>
            <person name="Wylie K."/>
            <person name="Sekhon M."/>
            <person name="Becker M.C."/>
            <person name="O'Laughlin M.D."/>
            <person name="Schaller M.E."/>
            <person name="Fewell G.A."/>
            <person name="Delehaunty K.D."/>
            <person name="Miner T.L."/>
            <person name="Nash W.E."/>
            <person name="Cordes M."/>
            <person name="Du H."/>
            <person name="Sun H."/>
            <person name="Edwards J."/>
            <person name="Bradshaw-Cordum H."/>
            <person name="Ali J."/>
            <person name="Andrews S."/>
            <person name="Isak A."/>
            <person name="Vanbrunt A."/>
            <person name="Nguyen C."/>
            <person name="Du F."/>
            <person name="Lamar B."/>
            <person name="Courtney L."/>
            <person name="Kalicki J."/>
            <person name="Ozersky P."/>
            <person name="Bielicki L."/>
            <person name="Scott K."/>
            <person name="Holmes A."/>
            <person name="Harkins R."/>
            <person name="Harris A."/>
            <person name="Strong C.M."/>
            <person name="Hou S."/>
            <person name="Tomlinson C."/>
            <person name="Dauphin-Kohlberg S."/>
            <person name="Kozlowicz-Reilly A."/>
            <person name="Leonard S."/>
            <person name="Rohlfing T."/>
            <person name="Rock S.M."/>
            <person name="Tin-Wollam A.-M."/>
            <person name="Abbott A."/>
            <person name="Minx P."/>
            <person name="Maupin R."/>
            <person name="Strowmatt C."/>
            <person name="Latreille P."/>
            <person name="Miller N."/>
            <person name="Johnson D."/>
            <person name="Murray J."/>
            <person name="Woessner J.P."/>
            <person name="Wendl M.C."/>
            <person name="Yang S.-P."/>
            <person name="Schultz B.R."/>
            <person name="Wallis J.W."/>
            <person name="Spieth J."/>
            <person name="Bieri T.A."/>
            <person name="Nelson J.O."/>
            <person name="Berkowicz N."/>
            <person name="Wohldmann P.E."/>
            <person name="Cook L.L."/>
            <person name="Hickenbotham M.T."/>
            <person name="Eldred J."/>
            <person name="Williams D."/>
            <person name="Bedell J.A."/>
            <person name="Mardis E.R."/>
            <person name="Clifton S.W."/>
            <person name="Chissoe S.L."/>
            <person name="Marra M.A."/>
            <person name="Raymond C."/>
            <person name="Haugen E."/>
            <person name="Gillett W."/>
            <person name="Zhou Y."/>
            <person name="James R."/>
            <person name="Phelps K."/>
            <person name="Iadanoto S."/>
            <person name="Bubb K."/>
            <person name="Simms E."/>
            <person name="Levy R."/>
            <person name="Clendenning J."/>
            <person name="Kaul R."/>
            <person name="Kent W.J."/>
            <person name="Furey T.S."/>
            <person name="Baertsch R.A."/>
            <person name="Brent M.R."/>
            <person name="Keibler E."/>
            <person name="Flicek P."/>
            <person name="Bork P."/>
            <person name="Suyama M."/>
            <person name="Bailey J.A."/>
            <person name="Portnoy M.E."/>
            <person name="Torrents D."/>
            <person name="Chinwalla A.T."/>
            <person name="Gish W.R."/>
            <person name="Eddy S.R."/>
            <person name="McPherson J.D."/>
            <person name="Olson M.V."/>
            <person name="Eichler E.E."/>
            <person name="Green E.D."/>
            <person name="Waterston R.H."/>
            <person name="Wilson R.K."/>
        </authorList>
    </citation>
    <scope>NUCLEOTIDE SEQUENCE [LARGE SCALE GENOMIC DNA]</scope>
</reference>
<reference key="3">
    <citation type="submission" date="2005-07" db="EMBL/GenBank/DDBJ databases">
        <authorList>
            <person name="Mural R.J."/>
            <person name="Istrail S."/>
            <person name="Sutton G.G."/>
            <person name="Florea L."/>
            <person name="Halpern A.L."/>
            <person name="Mobarry C.M."/>
            <person name="Lippert R."/>
            <person name="Walenz B."/>
            <person name="Shatkay H."/>
            <person name="Dew I."/>
            <person name="Miller J.R."/>
            <person name="Flanigan M.J."/>
            <person name="Edwards N.J."/>
            <person name="Bolanos R."/>
            <person name="Fasulo D."/>
            <person name="Halldorsson B.V."/>
            <person name="Hannenhalli S."/>
            <person name="Turner R."/>
            <person name="Yooseph S."/>
            <person name="Lu F."/>
            <person name="Nusskern D.R."/>
            <person name="Shue B.C."/>
            <person name="Zheng X.H."/>
            <person name="Zhong F."/>
            <person name="Delcher A.L."/>
            <person name="Huson D.H."/>
            <person name="Kravitz S.A."/>
            <person name="Mouchard L."/>
            <person name="Reinert K."/>
            <person name="Remington K.A."/>
            <person name="Clark A.G."/>
            <person name="Waterman M.S."/>
            <person name="Eichler E.E."/>
            <person name="Adams M.D."/>
            <person name="Hunkapiller M.W."/>
            <person name="Myers E.W."/>
            <person name="Venter J.C."/>
        </authorList>
    </citation>
    <scope>NUCLEOTIDE SEQUENCE [LARGE SCALE GENOMIC DNA]</scope>
</reference>
<reference key="4">
    <citation type="journal article" date="2004" name="Genome Res.">
        <title>The status, quality, and expansion of the NIH full-length cDNA project: the Mammalian Gene Collection (MGC).</title>
        <authorList>
            <consortium name="The MGC Project Team"/>
        </authorList>
    </citation>
    <scope>NUCLEOTIDE SEQUENCE [LARGE SCALE MRNA] (ISOFORM 2)</scope>
    <source>
        <tissue>Uterus</tissue>
    </source>
</reference>
<reference key="5">
    <citation type="journal article" date="1995" name="DNA Cell Biol.">
        <title>Isolation of cDNA clones for 42 different Kruppel-related zinc finger proteins expressed in the human monoblast cell line U-937.</title>
        <authorList>
            <person name="Abrink M."/>
            <person name="Aveskogh M."/>
            <person name="Hellman L."/>
        </authorList>
    </citation>
    <scope>NUCLEOTIDE SEQUENCE [MRNA] OF 322-569 (ISOFORMS 1/2)</scope>
    <scope>VARIANT ASP-461</scope>
</reference>
<comment type="function">
    <text>May be involved in transcriptional regulation.</text>
</comment>
<comment type="interaction">
    <interactant intactId="EBI-3922471">
        <id>Q14593</id>
    </interactant>
    <interactant intactId="EBI-10172150">
        <id>P60370</id>
        <label>KRTAP10-5</label>
    </interactant>
    <organismsDiffer>false</organismsDiffer>
    <experiments>3</experiments>
</comment>
<comment type="subcellular location">
    <subcellularLocation>
        <location evidence="7">Nucleus</location>
    </subcellularLocation>
</comment>
<comment type="alternative products">
    <event type="alternative splicing"/>
    <isoform>
        <id>Q14593-1</id>
        <name>1</name>
        <sequence type="displayed"/>
    </isoform>
    <isoform>
        <id>Q14593-2</id>
        <name>2</name>
        <sequence type="described" ref="VSP_038180"/>
    </isoform>
</comment>
<comment type="similarity">
    <text evidence="7">Belongs to the krueppel C2H2-type zinc-finger protein family.</text>
</comment>
<proteinExistence type="evidence at protein level"/>
<evidence type="ECO:0000255" key="1">
    <source>
        <dbReference type="PROSITE-ProRule" id="PRU00042"/>
    </source>
</evidence>
<evidence type="ECO:0000255" key="2">
    <source>
        <dbReference type="PROSITE-ProRule" id="PRU00119"/>
    </source>
</evidence>
<evidence type="ECO:0000256" key="3">
    <source>
        <dbReference type="SAM" id="MobiDB-lite"/>
    </source>
</evidence>
<evidence type="ECO:0000269" key="4">
    <source>
    </source>
</evidence>
<evidence type="ECO:0000303" key="5">
    <source>
    </source>
</evidence>
<evidence type="ECO:0000303" key="6">
    <source>
    </source>
</evidence>
<evidence type="ECO:0000305" key="7"/>
<organism>
    <name type="scientific">Homo sapiens</name>
    <name type="common">Human</name>
    <dbReference type="NCBI Taxonomy" id="9606"/>
    <lineage>
        <taxon>Eukaryota</taxon>
        <taxon>Metazoa</taxon>
        <taxon>Chordata</taxon>
        <taxon>Craniata</taxon>
        <taxon>Vertebrata</taxon>
        <taxon>Euteleostomi</taxon>
        <taxon>Mammalia</taxon>
        <taxon>Eutheria</taxon>
        <taxon>Euarchontoglires</taxon>
        <taxon>Primates</taxon>
        <taxon>Haplorrhini</taxon>
        <taxon>Catarrhini</taxon>
        <taxon>Hominidae</taxon>
        <taxon>Homo</taxon>
    </lineage>
</organism>
<sequence length="569" mass="64971">MSSAPRGPPSVAPLPAGIGRSTAKTPGLPGSLEMGPLTFRDVAIEFSLEEWQCLDTSQQNLYRNVMLDNYRNLVFLGIAVSKPDLITCLEQGKEPCNMKRHAMVAKPPVVCSHFAQDLWPKQGLKDSFQKVILRRYGKYGHENLQLRKGCKSADEHKVHKRGYNGLNQCLTTTQSKIFQCDKYVKVLHKFSNSNIHKKRQTGKKPFKCKECGKSCCILSQLTQHKKTATRVNFYKCKTCGKAFNQFSNLTKHKIIHPEVNPYKCEECGKAFNQSLTLTKHKKIHTEEKPYKCEDCGKVFSVFSVLTKHKIIHTGTKPYNCEECGKGFSIFSTLTKHKIIHTGEKPYKCNECGKAFNWSSTLTKHKRIHTGEKPYKCEECGKAFNQSSTLTRHKIVHTGEKPYKCEECGKAFKRSTTLTKHKRIYTKEKPYKCEECGKAFSVFSTLTKHKIIHTGAKPYKCEECGSAFRAFSTLTEHKRVHTGEKPYKCNECGKAFNWSSTLTKHKRIHTGEKPYKCEECGKAFNRSSNLTRHKKIHTGEKPYKPKRCDSAFDNTPNFSRHKRNHMGEKS</sequence>
<keyword id="KW-0025">Alternative splicing</keyword>
<keyword id="KW-0238">DNA-binding</keyword>
<keyword id="KW-0479">Metal-binding</keyword>
<keyword id="KW-0539">Nucleus</keyword>
<keyword id="KW-1267">Proteomics identification</keyword>
<keyword id="KW-1185">Reference proteome</keyword>
<keyword id="KW-0677">Repeat</keyword>
<keyword id="KW-0804">Transcription</keyword>
<keyword id="KW-0805">Transcription regulation</keyword>
<keyword id="KW-0862">Zinc</keyword>
<keyword id="KW-0863">Zinc-finger</keyword>
<gene>
    <name type="primary">ZNF273</name>
</gene>
<feature type="chain" id="PRO_0000047500" description="Zinc finger protein 273">
    <location>
        <begin position="1"/>
        <end position="569"/>
    </location>
</feature>
<feature type="domain" description="KRAB" evidence="2">
    <location>
        <begin position="66"/>
        <end position="108"/>
    </location>
</feature>
<feature type="zinc finger region" description="C2H2-type 1; degenerate" evidence="1">
    <location>
        <begin position="206"/>
        <end position="228"/>
    </location>
</feature>
<feature type="zinc finger region" description="C2H2-type 2" evidence="1">
    <location>
        <begin position="234"/>
        <end position="256"/>
    </location>
</feature>
<feature type="zinc finger region" description="C2H2-type 3" evidence="1">
    <location>
        <begin position="262"/>
        <end position="284"/>
    </location>
</feature>
<feature type="zinc finger region" description="C2H2-type 4" evidence="1">
    <location>
        <begin position="290"/>
        <end position="312"/>
    </location>
</feature>
<feature type="zinc finger region" description="C2H2-type 5" evidence="1">
    <location>
        <begin position="318"/>
        <end position="340"/>
    </location>
</feature>
<feature type="zinc finger region" description="C2H2-type 6" evidence="1">
    <location>
        <begin position="346"/>
        <end position="368"/>
    </location>
</feature>
<feature type="zinc finger region" description="C2H2-type 7" evidence="1">
    <location>
        <begin position="374"/>
        <end position="396"/>
    </location>
</feature>
<feature type="zinc finger region" description="C2H2-type 8; degenerate" evidence="1">
    <location>
        <begin position="402"/>
        <end position="423"/>
    </location>
</feature>
<feature type="zinc finger region" description="C2H2-type 9" evidence="1">
    <location>
        <begin position="430"/>
        <end position="452"/>
    </location>
</feature>
<feature type="zinc finger region" description="C2H2-type 10" evidence="1">
    <location>
        <begin position="458"/>
        <end position="480"/>
    </location>
</feature>
<feature type="zinc finger region" description="C2H2-type 11" evidence="1">
    <location>
        <begin position="486"/>
        <end position="508"/>
    </location>
</feature>
<feature type="zinc finger region" description="C2H2-type 12" evidence="1">
    <location>
        <begin position="514"/>
        <end position="536"/>
    </location>
</feature>
<feature type="zinc finger region" description="C2H2-type 13; degenerate" evidence="1">
    <location>
        <begin position="542"/>
        <end position="564"/>
    </location>
</feature>
<feature type="region of interest" description="Disordered" evidence="3">
    <location>
        <begin position="1"/>
        <end position="31"/>
    </location>
</feature>
<feature type="region of interest" description="Disordered" evidence="3">
    <location>
        <begin position="536"/>
        <end position="569"/>
    </location>
</feature>
<feature type="compositionally biased region" description="Pro residues" evidence="3">
    <location>
        <begin position="1"/>
        <end position="12"/>
    </location>
</feature>
<feature type="compositionally biased region" description="Basic and acidic residues" evidence="3">
    <location>
        <begin position="536"/>
        <end position="549"/>
    </location>
</feature>
<feature type="splice variant" id="VSP_038180" description="In isoform 2." evidence="5 6">
    <location>
        <begin position="1"/>
        <end position="65"/>
    </location>
</feature>
<feature type="sequence variant" id="VAR_059077" description="In dbSNP:rs1830080.">
    <original>G</original>
    <variation>E</variation>
    <location>
        <position position="454"/>
    </location>
</feature>
<feature type="sequence variant" id="VAR_059078" description="In dbSNP:rs2017252." evidence="4">
    <original>E</original>
    <variation>D</variation>
    <location>
        <position position="461"/>
    </location>
</feature>
<feature type="sequence conflict" description="In Ref. 5; CAA55532." evidence="7" ref="5">
    <location>
        <position position="418"/>
    </location>
</feature>
<dbReference type="EMBL" id="AK090648">
    <property type="protein sequence ID" value="BAG52207.1"/>
    <property type="molecule type" value="mRNA"/>
</dbReference>
<dbReference type="EMBL" id="DA094186">
    <property type="status" value="NOT_ANNOTATED_CDS"/>
    <property type="molecule type" value="mRNA"/>
</dbReference>
<dbReference type="EMBL" id="AC092161">
    <property type="status" value="NOT_ANNOTATED_CDS"/>
    <property type="molecule type" value="Genomic_DNA"/>
</dbReference>
<dbReference type="EMBL" id="CH471204">
    <property type="protein sequence ID" value="EAW77994.1"/>
    <property type="molecule type" value="Genomic_DNA"/>
</dbReference>
<dbReference type="EMBL" id="BC063818">
    <property type="protein sequence ID" value="AAH63818.1"/>
    <property type="molecule type" value="mRNA"/>
</dbReference>
<dbReference type="EMBL" id="X78932">
    <property type="protein sequence ID" value="CAA55532.1"/>
    <property type="molecule type" value="mRNA"/>
</dbReference>
<dbReference type="CCDS" id="CCDS5528.2">
    <molecule id="Q14593-1"/>
</dbReference>
<dbReference type="PIR" id="S47070">
    <property type="entry name" value="S47070"/>
</dbReference>
<dbReference type="RefSeq" id="NP_001372572.1">
    <molecule id="Q14593-2"/>
    <property type="nucleotide sequence ID" value="NM_001385643.1"/>
</dbReference>
<dbReference type="RefSeq" id="NP_001372573.1">
    <molecule id="Q14593-2"/>
    <property type="nucleotide sequence ID" value="NM_001385644.1"/>
</dbReference>
<dbReference type="RefSeq" id="NP_001372574.1">
    <molecule id="Q14593-2"/>
    <property type="nucleotide sequence ID" value="NM_001385645.1"/>
</dbReference>
<dbReference type="RefSeq" id="NP_001372578.1">
    <molecule id="Q14593-2"/>
    <property type="nucleotide sequence ID" value="NM_001385649.1"/>
</dbReference>
<dbReference type="RefSeq" id="NP_001372581.1">
    <molecule id="Q14593-2"/>
    <property type="nucleotide sequence ID" value="NM_001385652.1"/>
</dbReference>
<dbReference type="RefSeq" id="NP_001374950.1">
    <molecule id="Q14593-2"/>
    <property type="nucleotide sequence ID" value="NM_001388021.1"/>
</dbReference>
<dbReference type="RefSeq" id="NP_066971.2">
    <molecule id="Q14593-1"/>
    <property type="nucleotide sequence ID" value="NM_021148.3"/>
</dbReference>
<dbReference type="RefSeq" id="XP_016867177.1">
    <property type="nucleotide sequence ID" value="XM_017011688.1"/>
</dbReference>
<dbReference type="RefSeq" id="XP_016867178.1">
    <property type="nucleotide sequence ID" value="XM_017011689.1"/>
</dbReference>
<dbReference type="RefSeq" id="XP_016867179.1">
    <property type="nucleotide sequence ID" value="XM_017011690.1"/>
</dbReference>
<dbReference type="RefSeq" id="XP_016867180.1">
    <property type="nucleotide sequence ID" value="XM_017011691.1"/>
</dbReference>
<dbReference type="RefSeq" id="XP_016867181.1">
    <property type="nucleotide sequence ID" value="XM_017011692.1"/>
</dbReference>
<dbReference type="RefSeq" id="XP_016867182.1">
    <property type="nucleotide sequence ID" value="XM_017011693.1"/>
</dbReference>
<dbReference type="RefSeq" id="XP_016867183.1">
    <property type="nucleotide sequence ID" value="XM_017011694.1"/>
</dbReference>
<dbReference type="RefSeq" id="XP_016867184.1">
    <property type="nucleotide sequence ID" value="XM_017011695.1"/>
</dbReference>
<dbReference type="RefSeq" id="XP_016867185.1">
    <property type="nucleotide sequence ID" value="XM_017011696.1"/>
</dbReference>
<dbReference type="RefSeq" id="XP_016867186.1">
    <property type="nucleotide sequence ID" value="XM_017011697.1"/>
</dbReference>
<dbReference type="RefSeq" id="XP_016867187.1">
    <property type="nucleotide sequence ID" value="XM_017011698.1"/>
</dbReference>
<dbReference type="RefSeq" id="XP_024302403.1">
    <molecule id="Q14593-2"/>
    <property type="nucleotide sequence ID" value="XM_024446635.2"/>
</dbReference>
<dbReference type="RefSeq" id="XP_047275756.1">
    <molecule id="Q14593-2"/>
    <property type="nucleotide sequence ID" value="XM_047419800.1"/>
</dbReference>
<dbReference type="RefSeq" id="XP_047275757.1">
    <molecule id="Q14593-2"/>
    <property type="nucleotide sequence ID" value="XM_047419801.1"/>
</dbReference>
<dbReference type="RefSeq" id="XP_047275758.1">
    <molecule id="Q14593-2"/>
    <property type="nucleotide sequence ID" value="XM_047419802.1"/>
</dbReference>
<dbReference type="RefSeq" id="XP_047275759.1">
    <molecule id="Q14593-2"/>
    <property type="nucleotide sequence ID" value="XM_047419803.1"/>
</dbReference>
<dbReference type="RefSeq" id="XP_047275760.1">
    <molecule id="Q14593-2"/>
    <property type="nucleotide sequence ID" value="XM_047419804.1"/>
</dbReference>
<dbReference type="RefSeq" id="XP_047275761.1">
    <molecule id="Q14593-2"/>
    <property type="nucleotide sequence ID" value="XM_047419805.1"/>
</dbReference>
<dbReference type="RefSeq" id="XP_047275762.1">
    <molecule id="Q14593-2"/>
    <property type="nucleotide sequence ID" value="XM_047419806.1"/>
</dbReference>
<dbReference type="RefSeq" id="XP_047275763.1">
    <molecule id="Q14593-2"/>
    <property type="nucleotide sequence ID" value="XM_047419807.1"/>
</dbReference>
<dbReference type="RefSeq" id="XP_047275764.1">
    <molecule id="Q14593-2"/>
    <property type="nucleotide sequence ID" value="XM_047419808.1"/>
</dbReference>
<dbReference type="RefSeq" id="XP_047275765.1">
    <molecule id="Q14593-2"/>
    <property type="nucleotide sequence ID" value="XM_047419809.1"/>
</dbReference>
<dbReference type="RefSeq" id="XP_047275766.1">
    <molecule id="Q14593-2"/>
    <property type="nucleotide sequence ID" value="XM_047419810.1"/>
</dbReference>
<dbReference type="RefSeq" id="XP_047275767.1">
    <molecule id="Q14593-2"/>
    <property type="nucleotide sequence ID" value="XM_047419811.1"/>
</dbReference>
<dbReference type="RefSeq" id="XP_047275768.1">
    <molecule id="Q14593-2"/>
    <property type="nucleotide sequence ID" value="XM_047419812.1"/>
</dbReference>
<dbReference type="RefSeq" id="XP_047275769.1">
    <molecule id="Q14593-2"/>
    <property type="nucleotide sequence ID" value="XM_047419813.1"/>
</dbReference>
<dbReference type="RefSeq" id="XP_047275770.1">
    <molecule id="Q14593-2"/>
    <property type="nucleotide sequence ID" value="XM_047419814.1"/>
</dbReference>
<dbReference type="RefSeq" id="XP_047275771.1">
    <molecule id="Q14593-2"/>
    <property type="nucleotide sequence ID" value="XM_047419815.1"/>
</dbReference>
<dbReference type="RefSeq" id="XP_047275772.1">
    <molecule id="Q14593-2"/>
    <property type="nucleotide sequence ID" value="XM_047419816.1"/>
</dbReference>
<dbReference type="RefSeq" id="XP_047275773.1">
    <molecule id="Q14593-2"/>
    <property type="nucleotide sequence ID" value="XM_047419817.1"/>
</dbReference>
<dbReference type="RefSeq" id="XP_047275774.1">
    <molecule id="Q14593-2"/>
    <property type="nucleotide sequence ID" value="XM_047419818.1"/>
</dbReference>
<dbReference type="RefSeq" id="XP_047275775.1">
    <molecule id="Q14593-2"/>
    <property type="nucleotide sequence ID" value="XM_047419819.1"/>
</dbReference>
<dbReference type="RefSeq" id="XP_047275776.1">
    <molecule id="Q14593-2"/>
    <property type="nucleotide sequence ID" value="XM_047419820.1"/>
</dbReference>
<dbReference type="RefSeq" id="XP_047275777.1">
    <molecule id="Q14593-2"/>
    <property type="nucleotide sequence ID" value="XM_047419821.1"/>
</dbReference>
<dbReference type="RefSeq" id="XP_047275778.1">
    <molecule id="Q14593-2"/>
    <property type="nucleotide sequence ID" value="XM_047419822.1"/>
</dbReference>
<dbReference type="SMR" id="Q14593"/>
<dbReference type="BioGRID" id="116008">
    <property type="interactions" value="24"/>
</dbReference>
<dbReference type="FunCoup" id="Q14593">
    <property type="interactions" value="172"/>
</dbReference>
<dbReference type="IntAct" id="Q14593">
    <property type="interactions" value="20"/>
</dbReference>
<dbReference type="STRING" id="9606.ENSP00000418719"/>
<dbReference type="iPTMnet" id="Q14593"/>
<dbReference type="PhosphoSitePlus" id="Q14593"/>
<dbReference type="BioMuta" id="ZNF273"/>
<dbReference type="DMDM" id="259016458"/>
<dbReference type="jPOST" id="Q14593"/>
<dbReference type="MassIVE" id="Q14593"/>
<dbReference type="PaxDb" id="9606-ENSP00000418719"/>
<dbReference type="PeptideAtlas" id="Q14593"/>
<dbReference type="ProteomicsDB" id="60068">
    <molecule id="Q14593-1"/>
</dbReference>
<dbReference type="ProteomicsDB" id="60069">
    <molecule id="Q14593-2"/>
</dbReference>
<dbReference type="Pumba" id="Q14593"/>
<dbReference type="Antibodypedia" id="55900">
    <property type="antibodies" value="22 antibodies from 9 providers"/>
</dbReference>
<dbReference type="DNASU" id="10793"/>
<dbReference type="Ensembl" id="ENST00000476120.2">
    <molecule id="Q14593-1"/>
    <property type="protein sequence ID" value="ENSP00000418719.1"/>
    <property type="gene ID" value="ENSG00000198039.12"/>
</dbReference>
<dbReference type="GeneID" id="10793"/>
<dbReference type="KEGG" id="hsa:10793"/>
<dbReference type="MANE-Select" id="ENST00000476120.2">
    <property type="protein sequence ID" value="ENSP00000418719.1"/>
    <property type="RefSeq nucleotide sequence ID" value="NM_021148.3"/>
    <property type="RefSeq protein sequence ID" value="NP_066971.2"/>
</dbReference>
<dbReference type="UCSC" id="uc003tto.4">
    <molecule id="Q14593-1"/>
    <property type="organism name" value="human"/>
</dbReference>
<dbReference type="AGR" id="HGNC:13067"/>
<dbReference type="CTD" id="10793"/>
<dbReference type="DisGeNET" id="10793"/>
<dbReference type="GeneCards" id="ZNF273"/>
<dbReference type="HGNC" id="HGNC:13067">
    <property type="gene designation" value="ZNF273"/>
</dbReference>
<dbReference type="HPA" id="ENSG00000198039">
    <property type="expression patterns" value="Tissue enhanced (skin)"/>
</dbReference>
<dbReference type="MIM" id="604756">
    <property type="type" value="gene"/>
</dbReference>
<dbReference type="neXtProt" id="NX_Q14593"/>
<dbReference type="OpenTargets" id="ENSG00000198039"/>
<dbReference type="PharmGKB" id="PA37643"/>
<dbReference type="VEuPathDB" id="HostDB:ENSG00000198039"/>
<dbReference type="eggNOG" id="KOG1721">
    <property type="taxonomic scope" value="Eukaryota"/>
</dbReference>
<dbReference type="GeneTree" id="ENSGT01130000278311"/>
<dbReference type="HOGENOM" id="CLU_002678_44_5_1"/>
<dbReference type="InParanoid" id="Q14593"/>
<dbReference type="OMA" id="RHAMVVK"/>
<dbReference type="OrthoDB" id="9507578at2759"/>
<dbReference type="PAN-GO" id="Q14593">
    <property type="GO annotations" value="3 GO annotations based on evolutionary models"/>
</dbReference>
<dbReference type="PhylomeDB" id="Q14593"/>
<dbReference type="TreeFam" id="TF342117"/>
<dbReference type="PathwayCommons" id="Q14593"/>
<dbReference type="Reactome" id="R-HSA-212436">
    <property type="pathway name" value="Generic Transcription Pathway"/>
</dbReference>
<dbReference type="Reactome" id="R-HSA-9843940">
    <property type="pathway name" value="Regulation of endogenous retroelements by KRAB-ZFP proteins"/>
</dbReference>
<dbReference type="SignaLink" id="Q14593"/>
<dbReference type="BioGRID-ORCS" id="10793">
    <property type="hits" value="78 hits in 1074 CRISPR screens"/>
</dbReference>
<dbReference type="ChiTaRS" id="ZNF273">
    <property type="organism name" value="human"/>
</dbReference>
<dbReference type="GenomeRNAi" id="10793"/>
<dbReference type="Pharos" id="Q14593">
    <property type="development level" value="Tdark"/>
</dbReference>
<dbReference type="PRO" id="PR:Q14593"/>
<dbReference type="Proteomes" id="UP000005640">
    <property type="component" value="Chromosome 7"/>
</dbReference>
<dbReference type="RNAct" id="Q14593">
    <property type="molecule type" value="protein"/>
</dbReference>
<dbReference type="Bgee" id="ENSG00000198039">
    <property type="expression patterns" value="Expressed in right uterine tube and 165 other cell types or tissues"/>
</dbReference>
<dbReference type="ExpressionAtlas" id="Q14593">
    <property type="expression patterns" value="baseline and differential"/>
</dbReference>
<dbReference type="GO" id="GO:0005634">
    <property type="term" value="C:nucleus"/>
    <property type="evidence" value="ECO:0007669"/>
    <property type="project" value="UniProtKB-SubCell"/>
</dbReference>
<dbReference type="GO" id="GO:0000981">
    <property type="term" value="F:DNA-binding transcription factor activity, RNA polymerase II-specific"/>
    <property type="evidence" value="ECO:0000318"/>
    <property type="project" value="GO_Central"/>
</dbReference>
<dbReference type="GO" id="GO:0000978">
    <property type="term" value="F:RNA polymerase II cis-regulatory region sequence-specific DNA binding"/>
    <property type="evidence" value="ECO:0000318"/>
    <property type="project" value="GO_Central"/>
</dbReference>
<dbReference type="GO" id="GO:0008270">
    <property type="term" value="F:zinc ion binding"/>
    <property type="evidence" value="ECO:0007669"/>
    <property type="project" value="UniProtKB-KW"/>
</dbReference>
<dbReference type="GO" id="GO:0006355">
    <property type="term" value="P:regulation of DNA-templated transcription"/>
    <property type="evidence" value="ECO:0000318"/>
    <property type="project" value="GO_Central"/>
</dbReference>
<dbReference type="CDD" id="cd07765">
    <property type="entry name" value="KRAB_A-box"/>
    <property type="match status" value="1"/>
</dbReference>
<dbReference type="FunFam" id="3.30.160.60:FF:001737">
    <property type="entry name" value="Zinc finger protein 100"/>
    <property type="match status" value="2"/>
</dbReference>
<dbReference type="FunFam" id="3.30.160.60:FF:000034">
    <property type="entry name" value="zinc finger protein 25"/>
    <property type="match status" value="2"/>
</dbReference>
<dbReference type="FunFam" id="3.30.160.60:FF:001868">
    <property type="entry name" value="Zinc finger protein 264"/>
    <property type="match status" value="1"/>
</dbReference>
<dbReference type="FunFam" id="3.30.160.60:FF:000120">
    <property type="entry name" value="Zinc finger protein 430"/>
    <property type="match status" value="2"/>
</dbReference>
<dbReference type="FunFam" id="3.30.160.60:FF:000362">
    <property type="entry name" value="Zinc finger protein 606"/>
    <property type="match status" value="2"/>
</dbReference>
<dbReference type="FunFam" id="3.30.160.60:FF:001435">
    <property type="entry name" value="zinc finger protein 777"/>
    <property type="match status" value="1"/>
</dbReference>
<dbReference type="FunFam" id="3.30.160.60:FF:001933">
    <property type="entry name" value="Zinc finger protein 870"/>
    <property type="match status" value="1"/>
</dbReference>
<dbReference type="FunFam" id="3.30.160.60:FF:002483">
    <property type="entry name" value="Zinc finger protein 90"/>
    <property type="match status" value="1"/>
</dbReference>
<dbReference type="FunFam" id="3.30.160.60:FF:002767">
    <property type="entry name" value="Zinc finger protein 955A"/>
    <property type="match status" value="1"/>
</dbReference>
<dbReference type="Gene3D" id="6.10.140.140">
    <property type="match status" value="1"/>
</dbReference>
<dbReference type="Gene3D" id="3.30.160.60">
    <property type="entry name" value="Classic Zinc Finger"/>
    <property type="match status" value="13"/>
</dbReference>
<dbReference type="InterPro" id="IPR050752">
    <property type="entry name" value="C2H2-ZF_domain"/>
</dbReference>
<dbReference type="InterPro" id="IPR001909">
    <property type="entry name" value="KRAB"/>
</dbReference>
<dbReference type="InterPro" id="IPR036051">
    <property type="entry name" value="KRAB_dom_sf"/>
</dbReference>
<dbReference type="InterPro" id="IPR036236">
    <property type="entry name" value="Znf_C2H2_sf"/>
</dbReference>
<dbReference type="InterPro" id="IPR013087">
    <property type="entry name" value="Znf_C2H2_type"/>
</dbReference>
<dbReference type="PANTHER" id="PTHR24384">
    <property type="entry name" value="FINGER PUTATIVE TRANSCRIPTION FACTOR FAMILY-RELATED"/>
    <property type="match status" value="1"/>
</dbReference>
<dbReference type="PANTHER" id="PTHR24384:SF201">
    <property type="entry name" value="ZINC FINGER PROTEIN 100-RELATED"/>
    <property type="match status" value="1"/>
</dbReference>
<dbReference type="Pfam" id="PF01352">
    <property type="entry name" value="KRAB"/>
    <property type="match status" value="1"/>
</dbReference>
<dbReference type="Pfam" id="PF00096">
    <property type="entry name" value="zf-C2H2"/>
    <property type="match status" value="11"/>
</dbReference>
<dbReference type="SMART" id="SM00349">
    <property type="entry name" value="KRAB"/>
    <property type="match status" value="1"/>
</dbReference>
<dbReference type="SMART" id="SM00355">
    <property type="entry name" value="ZnF_C2H2"/>
    <property type="match status" value="13"/>
</dbReference>
<dbReference type="SUPFAM" id="SSF57667">
    <property type="entry name" value="beta-beta-alpha zinc fingers"/>
    <property type="match status" value="7"/>
</dbReference>
<dbReference type="SUPFAM" id="SSF109640">
    <property type="entry name" value="KRAB domain (Kruppel-associated box)"/>
    <property type="match status" value="1"/>
</dbReference>
<dbReference type="PROSITE" id="PS50805">
    <property type="entry name" value="KRAB"/>
    <property type="match status" value="1"/>
</dbReference>
<dbReference type="PROSITE" id="PS00028">
    <property type="entry name" value="ZINC_FINGER_C2H2_1"/>
    <property type="match status" value="10"/>
</dbReference>
<dbReference type="PROSITE" id="PS50157">
    <property type="entry name" value="ZINC_FINGER_C2H2_2"/>
    <property type="match status" value="13"/>
</dbReference>
<protein>
    <recommendedName>
        <fullName>Zinc finger protein 273</fullName>
    </recommendedName>
    <alternativeName>
        <fullName>Zinc finger protein HZF9</fullName>
    </alternativeName>
</protein>